<reference key="1">
    <citation type="journal article" date="2005" name="Nature">
        <title>Generation and annotation of the DNA sequences of human chromosomes 2 and 4.</title>
        <authorList>
            <person name="Hillier L.W."/>
            <person name="Graves T.A."/>
            <person name="Fulton R.S."/>
            <person name="Fulton L.A."/>
            <person name="Pepin K.H."/>
            <person name="Minx P."/>
            <person name="Wagner-McPherson C."/>
            <person name="Layman D."/>
            <person name="Wylie K."/>
            <person name="Sekhon M."/>
            <person name="Becker M.C."/>
            <person name="Fewell G.A."/>
            <person name="Delehaunty K.D."/>
            <person name="Miner T.L."/>
            <person name="Nash W.E."/>
            <person name="Kremitzki C."/>
            <person name="Oddy L."/>
            <person name="Du H."/>
            <person name="Sun H."/>
            <person name="Bradshaw-Cordum H."/>
            <person name="Ali J."/>
            <person name="Carter J."/>
            <person name="Cordes M."/>
            <person name="Harris A."/>
            <person name="Isak A."/>
            <person name="van Brunt A."/>
            <person name="Nguyen C."/>
            <person name="Du F."/>
            <person name="Courtney L."/>
            <person name="Kalicki J."/>
            <person name="Ozersky P."/>
            <person name="Abbott S."/>
            <person name="Armstrong J."/>
            <person name="Belter E.A."/>
            <person name="Caruso L."/>
            <person name="Cedroni M."/>
            <person name="Cotton M."/>
            <person name="Davidson T."/>
            <person name="Desai A."/>
            <person name="Elliott G."/>
            <person name="Erb T."/>
            <person name="Fronick C."/>
            <person name="Gaige T."/>
            <person name="Haakenson W."/>
            <person name="Haglund K."/>
            <person name="Holmes A."/>
            <person name="Harkins R."/>
            <person name="Kim K."/>
            <person name="Kruchowski S.S."/>
            <person name="Strong C.M."/>
            <person name="Grewal N."/>
            <person name="Goyea E."/>
            <person name="Hou S."/>
            <person name="Levy A."/>
            <person name="Martinka S."/>
            <person name="Mead K."/>
            <person name="McLellan M.D."/>
            <person name="Meyer R."/>
            <person name="Randall-Maher J."/>
            <person name="Tomlinson C."/>
            <person name="Dauphin-Kohlberg S."/>
            <person name="Kozlowicz-Reilly A."/>
            <person name="Shah N."/>
            <person name="Swearengen-Shahid S."/>
            <person name="Snider J."/>
            <person name="Strong J.T."/>
            <person name="Thompson J."/>
            <person name="Yoakum M."/>
            <person name="Leonard S."/>
            <person name="Pearman C."/>
            <person name="Trani L."/>
            <person name="Radionenko M."/>
            <person name="Waligorski J.E."/>
            <person name="Wang C."/>
            <person name="Rock S.M."/>
            <person name="Tin-Wollam A.-M."/>
            <person name="Maupin R."/>
            <person name="Latreille P."/>
            <person name="Wendl M.C."/>
            <person name="Yang S.-P."/>
            <person name="Pohl C."/>
            <person name="Wallis J.W."/>
            <person name="Spieth J."/>
            <person name="Bieri T.A."/>
            <person name="Berkowicz N."/>
            <person name="Nelson J.O."/>
            <person name="Osborne J."/>
            <person name="Ding L."/>
            <person name="Meyer R."/>
            <person name="Sabo A."/>
            <person name="Shotland Y."/>
            <person name="Sinha P."/>
            <person name="Wohldmann P.E."/>
            <person name="Cook L.L."/>
            <person name="Hickenbotham M.T."/>
            <person name="Eldred J."/>
            <person name="Williams D."/>
            <person name="Jones T.A."/>
            <person name="She X."/>
            <person name="Ciccarelli F.D."/>
            <person name="Izaurralde E."/>
            <person name="Taylor J."/>
            <person name="Schmutz J."/>
            <person name="Myers R.M."/>
            <person name="Cox D.R."/>
            <person name="Huang X."/>
            <person name="McPherson J.D."/>
            <person name="Mardis E.R."/>
            <person name="Clifton S.W."/>
            <person name="Warren W.C."/>
            <person name="Chinwalla A.T."/>
            <person name="Eddy S.R."/>
            <person name="Marra M.A."/>
            <person name="Ovcharenko I."/>
            <person name="Furey T.S."/>
            <person name="Miller W."/>
            <person name="Eichler E.E."/>
            <person name="Bork P."/>
            <person name="Suyama M."/>
            <person name="Torrents D."/>
            <person name="Waterston R.H."/>
            <person name="Wilson R.K."/>
        </authorList>
    </citation>
    <scope>NUCLEOTIDE SEQUENCE [LARGE SCALE GENOMIC DNA]</scope>
</reference>
<reference key="2">
    <citation type="journal article" date="2004" name="Genome Res.">
        <title>The status, quality, and expansion of the NIH full-length cDNA project: the Mammalian Gene Collection (MGC).</title>
        <authorList>
            <consortium name="The MGC Project Team"/>
        </authorList>
    </citation>
    <scope>NUCLEOTIDE SEQUENCE [LARGE SCALE MRNA] OF 34-725</scope>
    <source>
        <tissue>Pancreas</tissue>
        <tissue>PNS</tissue>
    </source>
</reference>
<reference key="3">
    <citation type="journal article" date="2000" name="Nat. Genet.">
        <title>Genetic variation in the gene encoding calpain-10 is associated with type 2 diabetes mellitus.</title>
        <authorList>
            <person name="Horikawa Y."/>
            <person name="Oda N."/>
            <person name="Cox N.J."/>
            <person name="Li X."/>
            <person name="Orho-Melander M."/>
            <person name="Hara M."/>
            <person name="Hinokio Y."/>
            <person name="Lindner T.H."/>
            <person name="Mashima H."/>
            <person name="Schwarz P.E.H."/>
            <person name="del Bosque-Plata L."/>
            <person name="Horikawa Y."/>
            <person name="Oda Y."/>
            <person name="Yoshiuchi I."/>
            <person name="Colilla S."/>
            <person name="Polonsky K.S."/>
            <person name="Wei S."/>
            <person name="Concannon P."/>
            <person name="Iwasaki N."/>
            <person name="Schulze J."/>
            <person name="Baier L.J."/>
            <person name="Bogardus C."/>
            <person name="Groop L."/>
            <person name="Boerwinkle E."/>
            <person name="Hanis C.L."/>
            <person name="Bell G.I."/>
        </authorList>
    </citation>
    <scope>NUCLEOTIDE SEQUENCE [MRNA] OF 99-725</scope>
    <scope>TISSUE SPECIFICITY</scope>
</reference>
<reference key="4">
    <citation type="journal article" date="2004" name="Nat. Genet.">
        <title>Complete sequencing and characterization of 21,243 full-length human cDNAs.</title>
        <authorList>
            <person name="Ota T."/>
            <person name="Suzuki Y."/>
            <person name="Nishikawa T."/>
            <person name="Otsuki T."/>
            <person name="Sugiyama T."/>
            <person name="Irie R."/>
            <person name="Wakamatsu A."/>
            <person name="Hayashi K."/>
            <person name="Sato H."/>
            <person name="Nagai K."/>
            <person name="Kimura K."/>
            <person name="Makita H."/>
            <person name="Sekine M."/>
            <person name="Obayashi M."/>
            <person name="Nishi T."/>
            <person name="Shibahara T."/>
            <person name="Tanaka T."/>
            <person name="Ishii S."/>
            <person name="Yamamoto J."/>
            <person name="Saito K."/>
            <person name="Kawai Y."/>
            <person name="Isono Y."/>
            <person name="Nakamura Y."/>
            <person name="Nagahari K."/>
            <person name="Murakami K."/>
            <person name="Yasuda T."/>
            <person name="Iwayanagi T."/>
            <person name="Wagatsuma M."/>
            <person name="Shiratori A."/>
            <person name="Sudo H."/>
            <person name="Hosoiri T."/>
            <person name="Kaku Y."/>
            <person name="Kodaira H."/>
            <person name="Kondo H."/>
            <person name="Sugawara M."/>
            <person name="Takahashi M."/>
            <person name="Kanda K."/>
            <person name="Yokoi T."/>
            <person name="Furuya T."/>
            <person name="Kikkawa E."/>
            <person name="Omura Y."/>
            <person name="Abe K."/>
            <person name="Kamihara K."/>
            <person name="Katsuta N."/>
            <person name="Sato K."/>
            <person name="Tanikawa M."/>
            <person name="Yamazaki M."/>
            <person name="Ninomiya K."/>
            <person name="Ishibashi T."/>
            <person name="Yamashita H."/>
            <person name="Murakawa K."/>
            <person name="Fujimori K."/>
            <person name="Tanai H."/>
            <person name="Kimata M."/>
            <person name="Watanabe M."/>
            <person name="Hiraoka S."/>
            <person name="Chiba Y."/>
            <person name="Ishida S."/>
            <person name="Ono Y."/>
            <person name="Takiguchi S."/>
            <person name="Watanabe S."/>
            <person name="Yosida M."/>
            <person name="Hotuta T."/>
            <person name="Kusano J."/>
            <person name="Kanehori K."/>
            <person name="Takahashi-Fujii A."/>
            <person name="Hara H."/>
            <person name="Tanase T.-O."/>
            <person name="Nomura Y."/>
            <person name="Togiya S."/>
            <person name="Komai F."/>
            <person name="Hara R."/>
            <person name="Takeuchi K."/>
            <person name="Arita M."/>
            <person name="Imose N."/>
            <person name="Musashino K."/>
            <person name="Yuuki H."/>
            <person name="Oshima A."/>
            <person name="Sasaki N."/>
            <person name="Aotsuka S."/>
            <person name="Yoshikawa Y."/>
            <person name="Matsunawa H."/>
            <person name="Ichihara T."/>
            <person name="Shiohata N."/>
            <person name="Sano S."/>
            <person name="Moriya S."/>
            <person name="Momiyama H."/>
            <person name="Satoh N."/>
            <person name="Takami S."/>
            <person name="Terashima Y."/>
            <person name="Suzuki O."/>
            <person name="Nakagawa S."/>
            <person name="Senoh A."/>
            <person name="Mizoguchi H."/>
            <person name="Goto Y."/>
            <person name="Shimizu F."/>
            <person name="Wakebe H."/>
            <person name="Hishigaki H."/>
            <person name="Watanabe T."/>
            <person name="Sugiyama A."/>
            <person name="Takemoto M."/>
            <person name="Kawakami B."/>
            <person name="Yamazaki M."/>
            <person name="Watanabe K."/>
            <person name="Kumagai A."/>
            <person name="Itakura S."/>
            <person name="Fukuzumi Y."/>
            <person name="Fujimori Y."/>
            <person name="Komiyama M."/>
            <person name="Tashiro H."/>
            <person name="Tanigami A."/>
            <person name="Fujiwara T."/>
            <person name="Ono T."/>
            <person name="Yamada K."/>
            <person name="Fujii Y."/>
            <person name="Ozaki K."/>
            <person name="Hirao M."/>
            <person name="Ohmori Y."/>
            <person name="Kawabata A."/>
            <person name="Hikiji T."/>
            <person name="Kobatake N."/>
            <person name="Inagaki H."/>
            <person name="Ikema Y."/>
            <person name="Okamoto S."/>
            <person name="Okitani R."/>
            <person name="Kawakami T."/>
            <person name="Noguchi S."/>
            <person name="Itoh T."/>
            <person name="Shigeta K."/>
            <person name="Senba T."/>
            <person name="Matsumura K."/>
            <person name="Nakajima Y."/>
            <person name="Mizuno T."/>
            <person name="Morinaga M."/>
            <person name="Sasaki M."/>
            <person name="Togashi T."/>
            <person name="Oyama M."/>
            <person name="Hata H."/>
            <person name="Watanabe M."/>
            <person name="Komatsu T."/>
            <person name="Mizushima-Sugano J."/>
            <person name="Satoh T."/>
            <person name="Shirai Y."/>
            <person name="Takahashi Y."/>
            <person name="Nakagawa K."/>
            <person name="Okumura K."/>
            <person name="Nagase T."/>
            <person name="Nomura N."/>
            <person name="Kikuchi H."/>
            <person name="Masuho Y."/>
            <person name="Yamashita R."/>
            <person name="Nakai K."/>
            <person name="Yada T."/>
            <person name="Nakamura Y."/>
            <person name="Ohara O."/>
            <person name="Isogai T."/>
            <person name="Sugano S."/>
        </authorList>
    </citation>
    <scope>NUCLEOTIDE SEQUENCE [LARGE SCALE MRNA] OF 347-725</scope>
</reference>
<reference key="5">
    <citation type="journal article" date="2007" name="BMC Genomics">
        <title>The full-ORF clone resource of the German cDNA consortium.</title>
        <authorList>
            <person name="Bechtel S."/>
            <person name="Rosenfelder H."/>
            <person name="Duda A."/>
            <person name="Schmidt C.P."/>
            <person name="Ernst U."/>
            <person name="Wellenreuther R."/>
            <person name="Mehrle A."/>
            <person name="Schuster C."/>
            <person name="Bahr A."/>
            <person name="Bloecker H."/>
            <person name="Heubner D."/>
            <person name="Hoerlein A."/>
            <person name="Michel G."/>
            <person name="Wedler H."/>
            <person name="Koehrer K."/>
            <person name="Ottenwaelder B."/>
            <person name="Poustka A."/>
            <person name="Wiemann S."/>
            <person name="Schupp I."/>
        </authorList>
    </citation>
    <scope>NUCLEOTIDE SEQUENCE [LARGE SCALE MRNA] OF 473-725</scope>
    <source>
        <tissue>Lymph node</tissue>
    </source>
</reference>
<reference key="6">
    <citation type="journal article" date="2009" name="Protein Pept. Lett.">
        <title>Arginyl aminopeptidase-like 1 (RNPEPL1) is an alternatively processed aminopeptidase with specificity for methionine, glutamine, and citrulline residues.</title>
        <authorList>
            <person name="Thompson M.W."/>
            <person name="Beasley K.A."/>
            <person name="Schmidt M.D."/>
            <person name="Seipelt R.L."/>
        </authorList>
    </citation>
    <scope>FUNCTION</scope>
    <scope>CATALYTIC ACTIVITY</scope>
    <scope>ACTIVITY REGULATION</scope>
    <scope>BIOPHYSICOCHEMICAL PROPERTIES</scope>
    <scope>TISSUE SPECIFICITY</scope>
</reference>
<reference key="7">
    <citation type="journal article" date="2006" name="Science">
        <title>The consensus coding sequences of human breast and colorectal cancers.</title>
        <authorList>
            <person name="Sjoeblom T."/>
            <person name="Jones S."/>
            <person name="Wood L.D."/>
            <person name="Parsons D.W."/>
            <person name="Lin J."/>
            <person name="Barber T.D."/>
            <person name="Mandelker D."/>
            <person name="Leary R.J."/>
            <person name="Ptak J."/>
            <person name="Silliman N."/>
            <person name="Szabo S."/>
            <person name="Buckhaults P."/>
            <person name="Farrell C."/>
            <person name="Meeh P."/>
            <person name="Markowitz S.D."/>
            <person name="Willis J."/>
            <person name="Dawson D."/>
            <person name="Willson J.K.V."/>
            <person name="Gazdar A.F."/>
            <person name="Hartigan J."/>
            <person name="Wu L."/>
            <person name="Liu C."/>
            <person name="Parmigiani G."/>
            <person name="Park B.H."/>
            <person name="Bachman K.E."/>
            <person name="Papadopoulos N."/>
            <person name="Vogelstein B."/>
            <person name="Kinzler K.W."/>
            <person name="Velculescu V.E."/>
        </authorList>
    </citation>
    <scope>VARIANT [LARGE SCALE ANALYSIS] MET-478</scope>
</reference>
<proteinExistence type="evidence at protein level"/>
<keyword id="KW-0031">Aminopeptidase</keyword>
<keyword id="KW-0378">Hydrolase</keyword>
<keyword id="KW-0479">Metal-binding</keyword>
<keyword id="KW-0482">Metalloprotease</keyword>
<keyword id="KW-0645">Protease</keyword>
<keyword id="KW-1267">Proteomics identification</keyword>
<keyword id="KW-1185">Reference proteome</keyword>
<keyword id="KW-0862">Zinc</keyword>
<accession>Q9HAU8</accession>
<accession>Q5XKC3</accession>
<accession>Q6NX56</accession>
<accession>Q96AC9</accession>
<accession>Q9H033</accession>
<accession>Q9NVD0</accession>
<name>RNPL1_HUMAN</name>
<comment type="function">
    <text evidence="6">Broad specificity aminopeptidase which preferentially hydrolyzes an N-terminal methionine, citrulline or glutamine.</text>
</comment>
<comment type="catalytic activity">
    <reaction evidence="6">
        <text>Release of N-terminal amino acids, preferentially methionine, from peptides and arylamides.</text>
        <dbReference type="EC" id="3.4.11.18"/>
    </reaction>
</comment>
<comment type="cofactor">
    <cofactor evidence="1">
        <name>Zn(2+)</name>
        <dbReference type="ChEBI" id="CHEBI:29105"/>
    </cofactor>
    <text evidence="1">Binds 1 zinc ion per subunit.</text>
</comment>
<comment type="activity regulation">
    <text evidence="6">Inhibited by calcium but not affected by chloride ions. Inhibited by amastatin and to a lower extent by bestatin. Weakly inhibited by puromycin.</text>
</comment>
<comment type="biophysicochemical properties">
    <kinetics>
        <KM evidence="6">0.37 mM for Met-AMC</KM>
        <KM evidence="6">0.17 mM for Citrulline-AMC</KM>
        <KM evidence="6">1.72 mM for Ala-AMC</KM>
        <KM evidence="6">0.91 mM for Arg-AMC</KM>
        <KM evidence="6">0.89 mM for Asn-AMC</KM>
        <KM evidence="6">0.41 mM for Gln-AMC</KM>
        <KM evidence="6">0.18 mM for His-AMC</KM>
        <KM evidence="6">1.05 mM for Ile-AMC</KM>
        <KM evidence="6">0.34 mM for Leu-AMC</KM>
        <KM evidence="6">1.72 mM for Lys-AMC</KM>
        <KM evidence="6">0.65 mM for Phe-AMC</KM>
        <KM evidence="6">1.76 mM for Ser-AMC</KM>
        <KM evidence="6">0.12 mM for Trp-AMC</KM>
        <KM evidence="6">0.12 mM for Tyr-AMC</KM>
    </kinetics>
    <phDependence>
        <text evidence="6">Optimum pH is 6.6-8.0.</text>
    </phDependence>
</comment>
<comment type="tissue specificity">
    <text evidence="4 6">Ubiquitously expressed. Expressed at relatively higher levels in heart and skeletal muscle.</text>
</comment>
<comment type="similarity">
    <text evidence="8">Belongs to the peptidase M1 family.</text>
</comment>
<comment type="sequence caution" evidence="8">
    <conflict type="erroneous initiation">
        <sequence resource="EMBL-CDS" id="AAG22080"/>
    </conflict>
    <text>Truncated N-terminus.</text>
</comment>
<comment type="sequence caution" evidence="8">
    <conflict type="erroneous initiation">
        <sequence resource="EMBL-CDS" id="AAH67258"/>
    </conflict>
    <text>Truncated N-terminus.</text>
</comment>
<comment type="sequence caution" evidence="8">
    <conflict type="erroneous gene model prediction">
        <sequence resource="EMBL-CDS" id="AAX88943"/>
    </conflict>
</comment>
<comment type="sequence caution" evidence="8">
    <conflict type="erroneous initiation">
        <sequence resource="EMBL-CDS" id="BAA91823"/>
    </conflict>
    <text>Truncated N-terminus.</text>
</comment>
<sequence>MAAQCCCRQAPGAEAAPVRPPPEPPPALDVASASSAQLFRLRHLQLGLELRPEARELAGCLVLELCALRPAPRALVLDAHPALRLHSAAFRRAPAAAAETPCAFAFSAPGPGPAPPPPLPAFPEAPGSEPACCPLAFRVDPFTDYGSSLTVTLPPELQAHQPFQVILRYTSTDAPAIWWLDPELTYGCAKPFVFTQGHSVCNRSFFPCFDTPAVKCTYSAVVKAPSGVQVLMSATRSAYMEEEGVFHFHMEHPVPAYLVALVAGDLKPADIGPRSRVWAEPCLLPTATSKLSGAVEQWLSAAERLYGPYMWGRYDIVFLPPSFPIVAMENPCLTFIISSILESDEFLVIDVIHEVAHSWFGNAVTNATWEEMWLSEGLATYAQRRITTETYGAAFTCLETAFRLDALHRQMKLLGEDSPVSKLQVKLEPGVNPSHLMNLFTYEKGYCFVYYLSQLCGDPQRFDDFLRAYVEKYKFTSVVAQDLLDSFLSFFPELKEQSVDCRAGLEFERWLNATGPPLAEPDLSQGSSLTRPVEALFQLWTAEPLDQAAASASAIDISKWRTFQTALFLDRLLDGSPLPQEVVMSLSKCYSSLLDSMNAEIRIRWLQIVVRNDYYPDLHRVRRFLESQMSRMYTIPLYEDLCTGALKSFALEVFYQTQGRLHPNLRRAIQQILSQGLGSSTEPASEPSTELGKAEADTDSDAQALLLGDEAPSSAISLRDVNVSA</sequence>
<protein>
    <recommendedName>
        <fullName evidence="9">Aminopeptidase RNPEPL1</fullName>
        <ecNumber evidence="6">3.4.11.-</ecNumber>
    </recommendedName>
    <alternativeName>
        <fullName evidence="10">Arginyl aminopeptidase-like 1</fullName>
    </alternativeName>
    <alternativeName>
        <fullName evidence="9">Methionyl aminopeptidase</fullName>
        <ecNumber evidence="6">3.4.11.18</ecNumber>
    </alternativeName>
</protein>
<gene>
    <name evidence="7 10" type="primary">RNPEPL1</name>
</gene>
<feature type="chain" id="PRO_0000095094" description="Aminopeptidase RNPEPL1">
    <location>
        <begin position="1"/>
        <end position="725"/>
    </location>
</feature>
<feature type="region of interest" description="Disordered" evidence="3">
    <location>
        <begin position="676"/>
        <end position="699"/>
    </location>
</feature>
<feature type="compositionally biased region" description="Low complexity" evidence="3">
    <location>
        <begin position="679"/>
        <end position="690"/>
    </location>
</feature>
<feature type="active site" description="Proton acceptor" evidence="1 2">
    <location>
        <position position="354"/>
    </location>
</feature>
<feature type="binding site" evidence="1">
    <location>
        <begin position="326"/>
        <end position="330"/>
    </location>
    <ligand>
        <name>substrate</name>
    </ligand>
</feature>
<feature type="binding site" evidence="1">
    <location>
        <position position="353"/>
    </location>
    <ligand>
        <name>Zn(2+)</name>
        <dbReference type="ChEBI" id="CHEBI:29105"/>
        <note>catalytic</note>
    </ligand>
</feature>
<feature type="binding site" evidence="1">
    <location>
        <position position="357"/>
    </location>
    <ligand>
        <name>Zn(2+)</name>
        <dbReference type="ChEBI" id="CHEBI:29105"/>
        <note>catalytic</note>
    </ligand>
</feature>
<feature type="binding site" evidence="1">
    <location>
        <position position="376"/>
    </location>
    <ligand>
        <name>Zn(2+)</name>
        <dbReference type="ChEBI" id="CHEBI:29105"/>
        <note>catalytic</note>
    </ligand>
</feature>
<feature type="site" description="Transition state stabilizer" evidence="1">
    <location>
        <position position="442"/>
    </location>
</feature>
<feature type="sequence variant" id="VAR_036046" description="In a colorectal cancer sample; somatic mutation; dbSNP:rs1454498603." evidence="5">
    <original>V</original>
    <variation>M</variation>
    <location>
        <position position="478"/>
    </location>
</feature>
<feature type="sequence conflict" description="In Ref. 3; AAG22080 and 4; BAA91823." evidence="8" ref="3 4">
    <original>V</original>
    <variation>E</variation>
    <location>
        <position position="609"/>
    </location>
</feature>
<dbReference type="EC" id="3.4.11.-" evidence="6"/>
<dbReference type="EC" id="3.4.11.18" evidence="6"/>
<dbReference type="EMBL" id="AC124862">
    <property type="protein sequence ID" value="AAX88943.1"/>
    <property type="status" value="ALT_SEQ"/>
    <property type="molecule type" value="Genomic_DNA"/>
</dbReference>
<dbReference type="EMBL" id="BC017301">
    <property type="protein sequence ID" value="AAH17301.2"/>
    <property type="molecule type" value="mRNA"/>
</dbReference>
<dbReference type="EMBL" id="BC067258">
    <property type="protein sequence ID" value="AAH67258.2"/>
    <property type="status" value="ALT_INIT"/>
    <property type="molecule type" value="mRNA"/>
</dbReference>
<dbReference type="EMBL" id="BC082975">
    <property type="protein sequence ID" value="AAH82975.1"/>
    <property type="molecule type" value="mRNA"/>
</dbReference>
<dbReference type="EMBL" id="AF300795">
    <property type="protein sequence ID" value="AAG22080.1"/>
    <property type="status" value="ALT_INIT"/>
    <property type="molecule type" value="mRNA"/>
</dbReference>
<dbReference type="EMBL" id="AK001668">
    <property type="protein sequence ID" value="BAA91823.1"/>
    <property type="status" value="ALT_INIT"/>
    <property type="molecule type" value="mRNA"/>
</dbReference>
<dbReference type="EMBL" id="AL512754">
    <property type="protein sequence ID" value="CAC21674.1"/>
    <property type="molecule type" value="mRNA"/>
</dbReference>
<dbReference type="RefSeq" id="NP_060696.4">
    <property type="nucleotide sequence ID" value="NM_018226.4"/>
</dbReference>
<dbReference type="SMR" id="Q9HAU8"/>
<dbReference type="BioGRID" id="121399">
    <property type="interactions" value="9"/>
</dbReference>
<dbReference type="FunCoup" id="Q9HAU8">
    <property type="interactions" value="19"/>
</dbReference>
<dbReference type="IntAct" id="Q9HAU8">
    <property type="interactions" value="6"/>
</dbReference>
<dbReference type="STRING" id="9606.ENSP00000270357"/>
<dbReference type="ChEMBL" id="CHEMBL3831223"/>
<dbReference type="MEROPS" id="M01.022"/>
<dbReference type="iPTMnet" id="Q9HAU8"/>
<dbReference type="PhosphoSitePlus" id="Q9HAU8"/>
<dbReference type="BioMuta" id="RNPEPL1"/>
<dbReference type="jPOST" id="Q9HAU8"/>
<dbReference type="MassIVE" id="Q9HAU8"/>
<dbReference type="PaxDb" id="9606-ENSP00000270357"/>
<dbReference type="PeptideAtlas" id="Q9HAU8"/>
<dbReference type="ProteomicsDB" id="81443"/>
<dbReference type="Antibodypedia" id="34524">
    <property type="antibodies" value="88 antibodies from 15 providers"/>
</dbReference>
<dbReference type="DNASU" id="57140"/>
<dbReference type="Ensembl" id="ENST00000270357.10">
    <property type="protein sequence ID" value="ENSP00000270357.4"/>
    <property type="gene ID" value="ENSG00000142327.13"/>
</dbReference>
<dbReference type="GeneID" id="57140"/>
<dbReference type="KEGG" id="hsa:57140"/>
<dbReference type="MANE-Select" id="ENST00000270357.10">
    <property type="protein sequence ID" value="ENSP00000270357.4"/>
    <property type="RefSeq nucleotide sequence ID" value="NM_018226.6"/>
    <property type="RefSeq protein sequence ID" value="NP_060696.4"/>
</dbReference>
<dbReference type="UCSC" id="uc061uih.1">
    <property type="organism name" value="human"/>
</dbReference>
<dbReference type="AGR" id="HGNC:10079"/>
<dbReference type="CTD" id="57140"/>
<dbReference type="DisGeNET" id="57140"/>
<dbReference type="GeneCards" id="RNPEPL1"/>
<dbReference type="HGNC" id="HGNC:10079">
    <property type="gene designation" value="RNPEPL1"/>
</dbReference>
<dbReference type="HPA" id="ENSG00000142327">
    <property type="expression patterns" value="Low tissue specificity"/>
</dbReference>
<dbReference type="MIM" id="605287">
    <property type="type" value="gene"/>
</dbReference>
<dbReference type="neXtProt" id="NX_Q9HAU8"/>
<dbReference type="OpenTargets" id="ENSG00000142327"/>
<dbReference type="PharmGKB" id="PA34452"/>
<dbReference type="VEuPathDB" id="HostDB:ENSG00000142327"/>
<dbReference type="eggNOG" id="KOG1047">
    <property type="taxonomic scope" value="Eukaryota"/>
</dbReference>
<dbReference type="GeneTree" id="ENSGT00940000160400"/>
<dbReference type="HOGENOM" id="CLU_014505_4_1_1"/>
<dbReference type="InParanoid" id="Q9HAU8"/>
<dbReference type="OMA" id="CYSAQLE"/>
<dbReference type="OrthoDB" id="79562at2759"/>
<dbReference type="PAN-GO" id="Q9HAU8">
    <property type="GO annotations" value="2 GO annotations based on evolutionary models"/>
</dbReference>
<dbReference type="PhylomeDB" id="Q9HAU8"/>
<dbReference type="TreeFam" id="TF300758"/>
<dbReference type="PathwayCommons" id="Q9HAU8"/>
<dbReference type="SignaLink" id="Q9HAU8"/>
<dbReference type="BioGRID-ORCS" id="57140">
    <property type="hits" value="11 hits in 312 CRISPR screens"/>
</dbReference>
<dbReference type="CD-CODE" id="91857CE7">
    <property type="entry name" value="Nucleolus"/>
</dbReference>
<dbReference type="ChiTaRS" id="RNPEPL1">
    <property type="organism name" value="human"/>
</dbReference>
<dbReference type="GenomeRNAi" id="57140"/>
<dbReference type="Pharos" id="Q9HAU8">
    <property type="development level" value="Tbio"/>
</dbReference>
<dbReference type="PRO" id="PR:Q9HAU8"/>
<dbReference type="Proteomes" id="UP000005640">
    <property type="component" value="Chromosome 2"/>
</dbReference>
<dbReference type="RNAct" id="Q9HAU8">
    <property type="molecule type" value="protein"/>
</dbReference>
<dbReference type="Bgee" id="ENSG00000142327">
    <property type="expression patterns" value="Expressed in apex of heart and 176 other cell types or tissues"/>
</dbReference>
<dbReference type="ExpressionAtlas" id="Q9HAU8">
    <property type="expression patterns" value="baseline and differential"/>
</dbReference>
<dbReference type="GO" id="GO:0004239">
    <property type="term" value="F:initiator methionyl aminopeptidase activity"/>
    <property type="evidence" value="ECO:0007669"/>
    <property type="project" value="UniProtKB-EC"/>
</dbReference>
<dbReference type="GO" id="GO:0070006">
    <property type="term" value="F:metalloaminopeptidase activity"/>
    <property type="evidence" value="ECO:0000314"/>
    <property type="project" value="UniProtKB"/>
</dbReference>
<dbReference type="GO" id="GO:0008270">
    <property type="term" value="F:zinc ion binding"/>
    <property type="evidence" value="ECO:0007669"/>
    <property type="project" value="InterPro"/>
</dbReference>
<dbReference type="GO" id="GO:0006508">
    <property type="term" value="P:proteolysis"/>
    <property type="evidence" value="ECO:0000314"/>
    <property type="project" value="UniProtKB"/>
</dbReference>
<dbReference type="CDD" id="cd09599">
    <property type="entry name" value="M1_LTA4H"/>
    <property type="match status" value="1"/>
</dbReference>
<dbReference type="FunFam" id="1.10.390.10:FF:000003">
    <property type="entry name" value="Leukotriene A(4) hydrolase"/>
    <property type="match status" value="1"/>
</dbReference>
<dbReference type="FunFam" id="1.25.40.320:FF:000001">
    <property type="entry name" value="Leukotriene A(4) hydrolase"/>
    <property type="match status" value="1"/>
</dbReference>
<dbReference type="FunFam" id="3.30.2010.30:FF:000001">
    <property type="entry name" value="Leukotriene A(4) hydrolase"/>
    <property type="match status" value="1"/>
</dbReference>
<dbReference type="Gene3D" id="3.30.2010.30">
    <property type="match status" value="1"/>
</dbReference>
<dbReference type="Gene3D" id="1.10.390.10">
    <property type="entry name" value="Neutral Protease Domain 2"/>
    <property type="match status" value="1"/>
</dbReference>
<dbReference type="Gene3D" id="1.25.40.320">
    <property type="entry name" value="Peptidase M1, leukotriene A4 hydrolase/aminopeptidase C-terminal domain"/>
    <property type="match status" value="1"/>
</dbReference>
<dbReference type="Gene3D" id="2.60.40.1730">
    <property type="entry name" value="tricorn interacting facor f3 domain"/>
    <property type="match status" value="1"/>
</dbReference>
<dbReference type="InterPro" id="IPR045357">
    <property type="entry name" value="Aminopeptidase_N-like_N"/>
</dbReference>
<dbReference type="InterPro" id="IPR042097">
    <property type="entry name" value="Aminopeptidase_N-like_N_sf"/>
</dbReference>
<dbReference type="InterPro" id="IPR016024">
    <property type="entry name" value="ARM-type_fold"/>
</dbReference>
<dbReference type="InterPro" id="IPR049980">
    <property type="entry name" value="LTA4H_cat"/>
</dbReference>
<dbReference type="InterPro" id="IPR038502">
    <property type="entry name" value="M1_LTA-4_hydro/amino_C_sf"/>
</dbReference>
<dbReference type="InterPro" id="IPR034015">
    <property type="entry name" value="M1_LTA4H"/>
</dbReference>
<dbReference type="InterPro" id="IPR001930">
    <property type="entry name" value="Peptidase_M1"/>
</dbReference>
<dbReference type="InterPro" id="IPR015211">
    <property type="entry name" value="Peptidase_M1_C"/>
</dbReference>
<dbReference type="InterPro" id="IPR014782">
    <property type="entry name" value="Peptidase_M1_dom"/>
</dbReference>
<dbReference type="InterPro" id="IPR027268">
    <property type="entry name" value="Peptidase_M4/M1_CTD_sf"/>
</dbReference>
<dbReference type="PANTHER" id="PTHR45726:SF2">
    <property type="entry name" value="AMINOPEPTIDASE RNPEPL1"/>
    <property type="match status" value="1"/>
</dbReference>
<dbReference type="PANTHER" id="PTHR45726">
    <property type="entry name" value="LEUKOTRIENE A-4 HYDROLASE"/>
    <property type="match status" value="1"/>
</dbReference>
<dbReference type="Pfam" id="PF09127">
    <property type="entry name" value="Leuk-A4-hydro_C"/>
    <property type="match status" value="1"/>
</dbReference>
<dbReference type="Pfam" id="PF01433">
    <property type="entry name" value="Peptidase_M1"/>
    <property type="match status" value="1"/>
</dbReference>
<dbReference type="Pfam" id="PF17900">
    <property type="entry name" value="Peptidase_M1_N"/>
    <property type="match status" value="1"/>
</dbReference>
<dbReference type="PRINTS" id="PR00756">
    <property type="entry name" value="ALADIPTASE"/>
</dbReference>
<dbReference type="SMART" id="SM01263">
    <property type="entry name" value="Leuk-A4-hydro_C"/>
    <property type="match status" value="1"/>
</dbReference>
<dbReference type="SUPFAM" id="SSF48371">
    <property type="entry name" value="ARM repeat"/>
    <property type="match status" value="1"/>
</dbReference>
<dbReference type="SUPFAM" id="SSF63737">
    <property type="entry name" value="Leukotriene A4 hydrolase N-terminal domain"/>
    <property type="match status" value="1"/>
</dbReference>
<dbReference type="SUPFAM" id="SSF55486">
    <property type="entry name" value="Metalloproteases ('zincins'), catalytic domain"/>
    <property type="match status" value="1"/>
</dbReference>
<evidence type="ECO:0000250" key="1">
    <source>
        <dbReference type="UniProtKB" id="P15144"/>
    </source>
</evidence>
<evidence type="ECO:0000255" key="2">
    <source>
        <dbReference type="PROSITE-ProRule" id="PRU10095"/>
    </source>
</evidence>
<evidence type="ECO:0000256" key="3">
    <source>
        <dbReference type="SAM" id="MobiDB-lite"/>
    </source>
</evidence>
<evidence type="ECO:0000269" key="4">
    <source>
    </source>
</evidence>
<evidence type="ECO:0000269" key="5">
    <source>
    </source>
</evidence>
<evidence type="ECO:0000269" key="6">
    <source>
    </source>
</evidence>
<evidence type="ECO:0000303" key="7">
    <source>
    </source>
</evidence>
<evidence type="ECO:0000305" key="8"/>
<evidence type="ECO:0000305" key="9">
    <source>
    </source>
</evidence>
<evidence type="ECO:0000312" key="10">
    <source>
        <dbReference type="HGNC" id="HGNC:10079"/>
    </source>
</evidence>
<organism>
    <name type="scientific">Homo sapiens</name>
    <name type="common">Human</name>
    <dbReference type="NCBI Taxonomy" id="9606"/>
    <lineage>
        <taxon>Eukaryota</taxon>
        <taxon>Metazoa</taxon>
        <taxon>Chordata</taxon>
        <taxon>Craniata</taxon>
        <taxon>Vertebrata</taxon>
        <taxon>Euteleostomi</taxon>
        <taxon>Mammalia</taxon>
        <taxon>Eutheria</taxon>
        <taxon>Euarchontoglires</taxon>
        <taxon>Primates</taxon>
        <taxon>Haplorrhini</taxon>
        <taxon>Catarrhini</taxon>
        <taxon>Hominidae</taxon>
        <taxon>Homo</taxon>
    </lineage>
</organism>